<name>NIPA2_PONAB</name>
<evidence type="ECO:0000250" key="1">
    <source>
        <dbReference type="UniProtKB" id="Q9JJC8"/>
    </source>
</evidence>
<evidence type="ECO:0000255" key="2"/>
<evidence type="ECO:0000305" key="3"/>
<comment type="function">
    <text evidence="1">Acts as a selective Mg(2+) transporter.</text>
</comment>
<comment type="catalytic activity">
    <reaction evidence="1">
        <text>Mg(2+)(in) = Mg(2+)(out)</text>
        <dbReference type="Rhea" id="RHEA:29827"/>
        <dbReference type="ChEBI" id="CHEBI:18420"/>
    </reaction>
</comment>
<comment type="subcellular location">
    <subcellularLocation>
        <location evidence="1">Cell membrane</location>
        <topology evidence="2">Multi-pass membrane protein</topology>
    </subcellularLocation>
    <subcellularLocation>
        <location evidence="1">Early endosome</location>
    </subcellularLocation>
    <text evidence="1">Recruited to the cell membrane in response to low extracellular magnesium.</text>
</comment>
<comment type="similarity">
    <text evidence="3">Belongs to the NIPA family.</text>
</comment>
<keyword id="KW-1003">Cell membrane</keyword>
<keyword id="KW-0967">Endosome</keyword>
<keyword id="KW-0406">Ion transport</keyword>
<keyword id="KW-0460">Magnesium</keyword>
<keyword id="KW-0472">Membrane</keyword>
<keyword id="KW-1185">Reference proteome</keyword>
<keyword id="KW-0812">Transmembrane</keyword>
<keyword id="KW-1133">Transmembrane helix</keyword>
<keyword id="KW-0813">Transport</keyword>
<dbReference type="EMBL" id="CR860059">
    <property type="protein sequence ID" value="CAH92207.1"/>
    <property type="molecule type" value="mRNA"/>
</dbReference>
<dbReference type="RefSeq" id="NP_001126291.1">
    <property type="nucleotide sequence ID" value="NM_001132819.1"/>
</dbReference>
<dbReference type="RefSeq" id="XP_009247865.1">
    <property type="nucleotide sequence ID" value="XM_009249590.3"/>
</dbReference>
<dbReference type="RefSeq" id="XP_009247866.1">
    <property type="nucleotide sequence ID" value="XM_009249591.4"/>
</dbReference>
<dbReference type="RefSeq" id="XP_009247867.1">
    <property type="nucleotide sequence ID" value="XM_009249592.4"/>
</dbReference>
<dbReference type="RefSeq" id="XP_009247868.1">
    <property type="nucleotide sequence ID" value="XM_009249593.4"/>
</dbReference>
<dbReference type="RefSeq" id="XP_009247869.1">
    <property type="nucleotide sequence ID" value="XM_009249594.4"/>
</dbReference>
<dbReference type="RefSeq" id="XP_009247870.1">
    <property type="nucleotide sequence ID" value="XM_009249595.3"/>
</dbReference>
<dbReference type="RefSeq" id="XP_009247871.1">
    <property type="nucleotide sequence ID" value="XM_009249596.4"/>
</dbReference>
<dbReference type="RefSeq" id="XP_024087940.1">
    <property type="nucleotide sequence ID" value="XM_024232172.3"/>
</dbReference>
<dbReference type="FunCoup" id="Q5R7Q3">
    <property type="interactions" value="1090"/>
</dbReference>
<dbReference type="STRING" id="9601.ENSPPYP00000007097"/>
<dbReference type="Ensembl" id="ENSPPYT00000046057.1">
    <property type="protein sequence ID" value="ENSPPYP00000040152.1"/>
    <property type="gene ID" value="ENSPPYG00000006259.3"/>
</dbReference>
<dbReference type="GeneID" id="100173267"/>
<dbReference type="KEGG" id="pon:100173267"/>
<dbReference type="CTD" id="81614"/>
<dbReference type="eggNOG" id="KOG2922">
    <property type="taxonomic scope" value="Eukaryota"/>
</dbReference>
<dbReference type="GeneTree" id="ENSGT00940000155651"/>
<dbReference type="HOGENOM" id="CLU_012349_1_1_1"/>
<dbReference type="InParanoid" id="Q5R7Q3"/>
<dbReference type="OMA" id="PMVYISI"/>
<dbReference type="OrthoDB" id="6428174at2759"/>
<dbReference type="TreeFam" id="TF313214"/>
<dbReference type="Proteomes" id="UP000001595">
    <property type="component" value="Chromosome 15"/>
</dbReference>
<dbReference type="GO" id="GO:0005769">
    <property type="term" value="C:early endosome"/>
    <property type="evidence" value="ECO:0007669"/>
    <property type="project" value="UniProtKB-SubCell"/>
</dbReference>
<dbReference type="GO" id="GO:0005886">
    <property type="term" value="C:plasma membrane"/>
    <property type="evidence" value="ECO:0000250"/>
    <property type="project" value="UniProtKB"/>
</dbReference>
<dbReference type="GO" id="GO:0015095">
    <property type="term" value="F:magnesium ion transmembrane transporter activity"/>
    <property type="evidence" value="ECO:0007669"/>
    <property type="project" value="InterPro"/>
</dbReference>
<dbReference type="GO" id="GO:0015693">
    <property type="term" value="P:magnesium ion transport"/>
    <property type="evidence" value="ECO:0000250"/>
    <property type="project" value="UniProtKB"/>
</dbReference>
<dbReference type="Gene3D" id="1.10.3730.20">
    <property type="match status" value="1"/>
</dbReference>
<dbReference type="InterPro" id="IPR008521">
    <property type="entry name" value="Mg_trans_NIPA"/>
</dbReference>
<dbReference type="PANTHER" id="PTHR12570">
    <property type="match status" value="1"/>
</dbReference>
<dbReference type="PANTHER" id="PTHR12570:SF1">
    <property type="entry name" value="MAGNESIUM TRANSPORTER NIPA2"/>
    <property type="match status" value="1"/>
</dbReference>
<dbReference type="Pfam" id="PF05653">
    <property type="entry name" value="Mg_trans_NIPA"/>
    <property type="match status" value="1"/>
</dbReference>
<dbReference type="SUPFAM" id="SSF103481">
    <property type="entry name" value="Multidrug resistance efflux transporter EmrE"/>
    <property type="match status" value="1"/>
</dbReference>
<feature type="chain" id="PRO_0000191745" description="Magnesium transporter NIPA2">
    <location>
        <begin position="1"/>
        <end position="360"/>
    </location>
</feature>
<feature type="topological domain" description="Extracellular" evidence="2">
    <location>
        <begin position="1"/>
        <end position="9"/>
    </location>
</feature>
<feature type="transmembrane region" description="Helical" evidence="2">
    <location>
        <begin position="10"/>
        <end position="30"/>
    </location>
</feature>
<feature type="topological domain" description="Cytoplasmic" evidence="2">
    <location>
        <begin position="31"/>
        <end position="56"/>
    </location>
</feature>
<feature type="transmembrane region" description="Helical" evidence="2">
    <location>
        <begin position="57"/>
        <end position="77"/>
    </location>
</feature>
<feature type="topological domain" description="Extracellular" evidence="2">
    <location>
        <position position="78"/>
    </location>
</feature>
<feature type="transmembrane region" description="Helical" evidence="2">
    <location>
        <begin position="79"/>
        <end position="99"/>
    </location>
</feature>
<feature type="topological domain" description="Cytoplasmic" evidence="2">
    <location>
        <begin position="100"/>
        <end position="107"/>
    </location>
</feature>
<feature type="transmembrane region" description="Helical" evidence="2">
    <location>
        <begin position="108"/>
        <end position="128"/>
    </location>
</feature>
<feature type="topological domain" description="Extracellular" evidence="2">
    <location>
        <begin position="129"/>
        <end position="149"/>
    </location>
</feature>
<feature type="transmembrane region" description="Helical" evidence="2">
    <location>
        <begin position="150"/>
        <end position="170"/>
    </location>
</feature>
<feature type="topological domain" description="Cytoplasmic" evidence="2">
    <location>
        <begin position="171"/>
        <end position="175"/>
    </location>
</feature>
<feature type="transmembrane region" description="Helical" evidence="2">
    <location>
        <begin position="176"/>
        <end position="196"/>
    </location>
</feature>
<feature type="topological domain" description="Extracellular" evidence="2">
    <location>
        <begin position="197"/>
        <end position="215"/>
    </location>
</feature>
<feature type="transmembrane region" description="Helical" evidence="2">
    <location>
        <begin position="216"/>
        <end position="236"/>
    </location>
</feature>
<feature type="topological domain" description="Cytoplasmic" evidence="2">
    <location>
        <begin position="237"/>
        <end position="246"/>
    </location>
</feature>
<feature type="transmembrane region" description="Helical" evidence="2">
    <location>
        <begin position="247"/>
        <end position="267"/>
    </location>
</feature>
<feature type="topological domain" description="Extracellular" evidence="2">
    <location>
        <begin position="268"/>
        <end position="278"/>
    </location>
</feature>
<feature type="transmembrane region" description="Helical" evidence="2">
    <location>
        <begin position="279"/>
        <end position="299"/>
    </location>
</feature>
<feature type="topological domain" description="Cytoplasmic" evidence="2">
    <location>
        <begin position="300"/>
        <end position="360"/>
    </location>
</feature>
<organism>
    <name type="scientific">Pongo abelii</name>
    <name type="common">Sumatran orangutan</name>
    <name type="synonym">Pongo pygmaeus abelii</name>
    <dbReference type="NCBI Taxonomy" id="9601"/>
    <lineage>
        <taxon>Eukaryota</taxon>
        <taxon>Metazoa</taxon>
        <taxon>Chordata</taxon>
        <taxon>Craniata</taxon>
        <taxon>Vertebrata</taxon>
        <taxon>Euteleostomi</taxon>
        <taxon>Mammalia</taxon>
        <taxon>Eutheria</taxon>
        <taxon>Euarchontoglires</taxon>
        <taxon>Primates</taxon>
        <taxon>Haplorrhini</taxon>
        <taxon>Catarrhini</taxon>
        <taxon>Hominidae</taxon>
        <taxon>Pongo</taxon>
    </lineage>
</organism>
<accession>Q5R7Q3</accession>
<proteinExistence type="evidence at transcript level"/>
<gene>
    <name type="primary">NIPA2</name>
</gene>
<reference key="1">
    <citation type="submission" date="2004-11" db="EMBL/GenBank/DDBJ databases">
        <authorList>
            <consortium name="The German cDNA consortium"/>
        </authorList>
    </citation>
    <scope>NUCLEOTIDE SEQUENCE [LARGE SCALE MRNA]</scope>
    <source>
        <tissue>Kidney</tissue>
    </source>
</reference>
<sequence>MSQGRGKYDFYIGLGLAMSSSIFIGGSFILKKKGLLRLARKGSMRAGQGGHAYLKEWLWWAGLLSMGAGEVANFAAYAFAPATLVTPLGALSVLVSAILSSYFLNERLNLHGKIGCLLSILGSTVMVIHAPKEEEIETLNEMSHKLGDPGFVVFATLVVIVALILIFVVGPRHGQTNILVYITICSVIGAFSVSCVKGLGIAIKELFAGKPVLRHPLAWILLLSLIVCVSTQINYLNRALDIFNTSIVTPIYYVFFTTSVLTCSAILFKEWQDMPVDDVIGTLSGFFTIIVGIFLLHAFKDVSFSLASLPVSFRKDEKAMNGNLSNMYEVLNNNEESLTCGIEQHTGENVSRRNGNLTAF</sequence>
<protein>
    <recommendedName>
        <fullName>Magnesium transporter NIPA2</fullName>
    </recommendedName>
    <alternativeName>
        <fullName>Non-imprinted in Prader-Willi/Angelman syndrome region protein 2 homolog</fullName>
    </alternativeName>
</protein>